<comment type="similarity">
    <text evidence="1">Belongs to the UPF0173 family.</text>
</comment>
<reference key="1">
    <citation type="journal article" date="2009" name="Environ. Microbiol.">
        <title>Contribution of mobile genetic elements to Desulfovibrio vulgaris genome plasticity.</title>
        <authorList>
            <person name="Walker C.B."/>
            <person name="Stolyar S."/>
            <person name="Chivian D."/>
            <person name="Pinel N."/>
            <person name="Gabster J.A."/>
            <person name="Dehal P.S."/>
            <person name="He Z."/>
            <person name="Yang Z.K."/>
            <person name="Yen H.C."/>
            <person name="Zhou J."/>
            <person name="Wall J.D."/>
            <person name="Hazen T.C."/>
            <person name="Arkin A.P."/>
            <person name="Stahl D.A."/>
        </authorList>
    </citation>
    <scope>NUCLEOTIDE SEQUENCE [LARGE SCALE GENOMIC DNA]</scope>
    <source>
        <strain>DP4</strain>
    </source>
</reference>
<keyword id="KW-0378">Hydrolase</keyword>
<evidence type="ECO:0000255" key="1">
    <source>
        <dbReference type="HAMAP-Rule" id="MF_00457"/>
    </source>
</evidence>
<proteinExistence type="inferred from homology"/>
<sequence length="239" mass="25872">MQTRITWHGHSNFQVASGGTNVLIDPFFDGNPVAATRWDAIDRPDLVLVTHDHGDHVGQAIDICKATGAKLGCVVGTDARLVEAGLPRELVLNGIGFNIGGTVECAGVRITMTQAYHSSESGVPVGYIVTMPDGFTFYHAGDTGIFSEMELWGRLYAIDLALLPIGGVFTMDPRQAALACSLLRARSVIPMHWGTFPVLEQNTTRFREQLANHAPDCRLFNMTPGESLTLDRSQEGCAC</sequence>
<name>Y081_NITV4</name>
<organism>
    <name type="scientific">Nitratidesulfovibrio vulgaris (strain DP4)</name>
    <name type="common">Desulfovibrio vulgaris</name>
    <dbReference type="NCBI Taxonomy" id="391774"/>
    <lineage>
        <taxon>Bacteria</taxon>
        <taxon>Pseudomonadati</taxon>
        <taxon>Thermodesulfobacteriota</taxon>
        <taxon>Desulfovibrionia</taxon>
        <taxon>Desulfovibrionales</taxon>
        <taxon>Desulfovibrionaceae</taxon>
        <taxon>Nitratidesulfovibrio</taxon>
    </lineage>
</organism>
<dbReference type="EMBL" id="CP000527">
    <property type="protein sequence ID" value="ABM27105.1"/>
    <property type="molecule type" value="Genomic_DNA"/>
</dbReference>
<dbReference type="RefSeq" id="WP_011791377.1">
    <property type="nucleotide sequence ID" value="NC_008751.1"/>
</dbReference>
<dbReference type="SMR" id="A1V9I9"/>
<dbReference type="KEGG" id="dvl:Dvul_0081"/>
<dbReference type="HOGENOM" id="CLU_070010_4_0_7"/>
<dbReference type="Proteomes" id="UP000009173">
    <property type="component" value="Chromosome"/>
</dbReference>
<dbReference type="GO" id="GO:0016787">
    <property type="term" value="F:hydrolase activity"/>
    <property type="evidence" value="ECO:0007669"/>
    <property type="project" value="UniProtKB-UniRule"/>
</dbReference>
<dbReference type="Gene3D" id="3.60.15.10">
    <property type="entry name" value="Ribonuclease Z/Hydroxyacylglutathione hydrolase-like"/>
    <property type="match status" value="1"/>
</dbReference>
<dbReference type="HAMAP" id="MF_00457">
    <property type="entry name" value="UPF0173"/>
    <property type="match status" value="1"/>
</dbReference>
<dbReference type="InterPro" id="IPR001279">
    <property type="entry name" value="Metallo-B-lactamas"/>
</dbReference>
<dbReference type="InterPro" id="IPR036866">
    <property type="entry name" value="RibonucZ/Hydroxyglut_hydro"/>
</dbReference>
<dbReference type="InterPro" id="IPR022877">
    <property type="entry name" value="UPF0173"/>
</dbReference>
<dbReference type="InterPro" id="IPR050114">
    <property type="entry name" value="UPF0173_UPF0282_UlaG_hydrolase"/>
</dbReference>
<dbReference type="NCBIfam" id="NF001911">
    <property type="entry name" value="PRK00685.1"/>
    <property type="match status" value="1"/>
</dbReference>
<dbReference type="PANTHER" id="PTHR43546:SF3">
    <property type="entry name" value="UPF0173 METAL-DEPENDENT HYDROLASE MJ1163"/>
    <property type="match status" value="1"/>
</dbReference>
<dbReference type="PANTHER" id="PTHR43546">
    <property type="entry name" value="UPF0173 METAL-DEPENDENT HYDROLASE MJ1163-RELATED"/>
    <property type="match status" value="1"/>
</dbReference>
<dbReference type="Pfam" id="PF12706">
    <property type="entry name" value="Lactamase_B_2"/>
    <property type="match status" value="1"/>
</dbReference>
<dbReference type="SMART" id="SM00849">
    <property type="entry name" value="Lactamase_B"/>
    <property type="match status" value="1"/>
</dbReference>
<dbReference type="SUPFAM" id="SSF56281">
    <property type="entry name" value="Metallo-hydrolase/oxidoreductase"/>
    <property type="match status" value="1"/>
</dbReference>
<accession>A1V9I9</accession>
<feature type="chain" id="PRO_0000367177" description="UPF0173 metal-dependent hydrolase Dvul_0081">
    <location>
        <begin position="1"/>
        <end position="239"/>
    </location>
</feature>
<gene>
    <name type="ordered locus">Dvul_0081</name>
</gene>
<protein>
    <recommendedName>
        <fullName evidence="1">UPF0173 metal-dependent hydrolase Dvul_0081</fullName>
    </recommendedName>
</protein>